<evidence type="ECO:0000250" key="1">
    <source>
        <dbReference type="UniProtKB" id="A8WTE8"/>
    </source>
</evidence>
<evidence type="ECO:0000255" key="2"/>
<evidence type="ECO:0000255" key="3">
    <source>
        <dbReference type="PROSITE-ProRule" id="PRU00269"/>
    </source>
</evidence>
<evidence type="ECO:0000255" key="4">
    <source>
        <dbReference type="PROSITE-ProRule" id="PRU00534"/>
    </source>
</evidence>
<evidence type="ECO:0000255" key="5">
    <source>
        <dbReference type="PROSITE-ProRule" id="PRU00535"/>
    </source>
</evidence>
<evidence type="ECO:0000256" key="6">
    <source>
        <dbReference type="SAM" id="MobiDB-lite"/>
    </source>
</evidence>
<evidence type="ECO:0000269" key="7">
    <source>
    </source>
</evidence>
<evidence type="ECO:0000269" key="8">
    <source>
    </source>
</evidence>
<evidence type="ECO:0000269" key="9">
    <source>
    </source>
</evidence>
<evidence type="ECO:0000303" key="10">
    <source>
    </source>
</evidence>
<evidence type="ECO:0000303" key="11">
    <source>
    </source>
</evidence>
<evidence type="ECO:0000305" key="12"/>
<evidence type="ECO:0000312" key="13">
    <source>
        <dbReference type="EMBL" id="AAS65430.1"/>
    </source>
</evidence>
<evidence type="ECO:0000312" key="14">
    <source>
        <dbReference type="Proteomes" id="UP000001940"/>
    </source>
</evidence>
<evidence type="ECO:0000312" key="15">
    <source>
        <dbReference type="WormBase" id="C47D12.1a"/>
    </source>
</evidence>
<evidence type="ECO:0000312" key="16">
    <source>
        <dbReference type="WormBase" id="C47D12.1b"/>
    </source>
</evidence>
<evidence type="ECO:0000312" key="17">
    <source>
        <dbReference type="WormBase" id="C47D12.1c"/>
    </source>
</evidence>
<gene>
    <name evidence="15" type="primary">trr-1</name>
    <name evidence="15" type="ORF">C47D12.1</name>
</gene>
<protein>
    <recommendedName>
        <fullName evidence="15">Transcription-associated protein 1</fullName>
        <shortName evidence="10">Cel-trr-1</shortName>
        <shortName evidence="15">TRRAP-like protein 1</shortName>
    </recommendedName>
</protein>
<sequence>MDPAMASPGYRSVQSDRSNHLTELETRIQNLADNSQRDDVKLKMLQEIWSTIENHFTLSSHEKVVERLILSFLQVFCNTSPQFIAENNTQQLRKLMLEIILRLSNVEAMKHHSKEIIKQMMRLITVENEENANLAIKIVTDQGRSTGKMQYCGEVSQIMVSFKTMVIDLTASGRAGDMFNIKEHKAPPSTSSDEQVITEYLKTCYYQQTVLLNGTEGKPPLKYNMIPSAHQSTKVLLEVPYLVIFFYQHFKTAIQTEALDFMRLGLDFLNVRVPDEDKLKTNQIITDDFVSAQSRFLSFVNIMAKIPAFMDLIMQNGPLLVSGTMQMLERCPADLISVRREVLMALKYFTSGEMKSKFFPMLPRLIAEEVVLGTGFTAIEHLRVFMYQMLADLLHHMRNSIDYEMITHVIFVFCRTLHDPNNSSQVQIMSARLLNSLAESLCKMDSHDTFQTRDLLIEILESHVAKLKTLAVYHMPILFQQYGTEIDYEYKSYERDAEKPGMNIPKDTIRGVPKRRIRRLSIDSVEELEFLASEPSTSEDADESGGDPNKLPPPTKEGKKTSPEAILTAMSTMTPPPLAIVEARNLVKYIMHTCKFVTGQLRIARPSQDMYHCSKERDLFERLLRYGVMCMDVFVLPTTRNQPQMHSSMRTKDEKDALESLANVFTTIDHAIFREIFEKYMDFLIERIYNRNYPLQLMVNTFLVRNEVPFFASTMLSFLMSRMKLLEVSNDKTMLYVKLFKIIFSAIGANGSGLHGDKMLTSYLPEILKQSTVLALTAREPLNYFLLLRALFRSIGGGAQDILYGKFLQLLPNLLQFLNKLTNLQSCQHRIQMRELFVELCLTVPVRLSSLLPYLPLLMDPLVCAMNGSPNIVTQGLRTLELCVDNLQPEYLLENMLPVRGALMQGLWRVVSKAPDTSSMTAAFRILGKFGGANRKLLNQPQILQVATLGDTVQSYINMEFSRMGLDGNHSIHLPLSELMRVVADQMRYPADMILNPSPAMIPSTHMKKWCMELSKAVLLAGLGSSGSPITPSANLPKIIKKLLEDFDPNNRTTEVYTCPRESDRELFVNALLAMAYGIWNKDGFRHVYSKFFIKVLRQFALIGVLEYIGGNGWMRHAEEEGVLPLCLDSSVMVDALIICLSETSSSFIIAGVMSLRHINETLSLTLPDIDQMSKVPMCKYLMEKVFKLCHGPAWYARSGGINAIGYMIESFPRKFVMDFVIDVVDSIMEVILGTVEEISSGSADSAYDCLKKMMRVYFIKEEGQEEENLTLATIFVSAISKHYFHSNERVREFAIGLMDHCMVHSRLAPSLDKFYYRFKEFFEPELMRVLTTVPTMSLADAGGSLDGVQNYMFNCPDGFDFEKDMDMYKRYLSHLLDIAQTDTFTLNQRNAFKKCETCPSHFLPPFPITTHIDSMRASALQCLVIAYDRMKKQYIDKGIELGDEHKMIEILALRSSKITVDQVYESDESWRRLMTVLLRAVTDRETPEIAEKLHPSLLKVSPISTIIIATFGASYIRNISGAGDDSDSDRHISYNDIMKFKCLVELNPKILVTKMAVNLANQMVKYKMSDKISRILSVPSSFTEEELDDFEAEKMKGIRELDMIGHTVKMLAGCPVTTFTEQIIVDISRFAAHFEYAYSQDVLVNWIDDVTVILNKSPKDVWKFFLSRESILDPARRSFIRRIIVYQSSGPLRQEFMDTPEYFEKLIDLDDEENKDEDERKIWDRDMFAFSIVDRISKSCPEWLISPNSPIPRIKKLFSETEFNERYVVRALTEVKKFQEEIIVKRMTEHKYKVPKLILNTFLRYLRLNIYDYDLFIVIASCFNGNFVTDLSFLREYLETEVIPKVPLQWRRELFLRIMQKFDTDPQTAGTSMQHVKALQYLVIPTLHWAFERYDTDEIVGTAPIDDSDSSMDVDPAGSSDNLVARLTSVIDSHRNYLSDGMVIVFYQLCTLFVQNASEHIHNNNCKKQGGRLRILMLFAWPCLTMYNHQDPTMRYTGFFFLANIIERFTINRKIVLQVFHQLMTTYQQDTRDQIRKAIDILTPALRTRMEDGHLQILSHVKKILIEECHNLQHVQHVFQMVVRNYRVYYHVRLELLTPLLNGVQRALVMPNSVLENWQTRRHAVEICEMVIKWELFRTLKTDHIISDEEALEVDKQLDKLRTASSTDRFDFEEAHNKRDMPDAQRTIIKEHADVIVNMLVRFCMTFHQNSGSSSTSQSGNHGVELTKKCQLLLRAALRPSMWGEFVSFRLTMIEKFLSIPNDNALRNDISSTAYANTIQNAQHTLDMLCNIIPVMPKTSLMTMMRQLQRPLIQCLNNGAQNFKMTRLVTQIVSRLLEKTNVSVNGLDELEQLNQYISRFLHEHFGSLLNCRNLSGPVLGVLGAFSLLRTICGHEPAYLDHLMPSFVKVMERAAKEHLAYVANSQDGNMVKNFFPDVAELLCACMELVRPRVDHISMEIKRSIVGGIIAELIIKSNHDKIIQTSVKLLGAMISTQDMEFTILTVLPLLVRIQSIIVTKFKNCKDLIADYLVVVITVFENSEYRNSEAGSRLWEGFFWGLKSSDPQTREKFSIVWEKTWPHMATVDIAHRMKYIMQNQDWSKFKHAFWLKFALWGMLRTIAKRPTDPNNKRKKVILLNCATPWRTIEYAAKLKDQPMEVETEMKREEPEPMEVDEKDSQDDSKDAGEPKEKEKLTLELLLAGQQELLDEASNYDFADALDTVSQITFALNENQVTSKMWVVLFKSFWSSLSQSEIEDFTALVVPFMSSGVHNNYQTGVQDSVLAVWLEAVGDAVHLPSRLIEFISSKHECWHTGIRLLENHIWTIPKQLNNTLLREMKVAPGLAGDIETLESLGTLYNEISEFDQFAAIWERRAVFPDTMRAMSAMQLGDMELAQSYLEKSMSSTYETLAPTINPNNTSNSEKHVSPIIDKEYDHWMEMYITNCSELLQWQNVADVCNGKDMQHVRGLINAASHIPDWNVVEECKSQIAGCIPPSFHLDYTLFNLMSTVMRMNENSSPTHMKERCKIAIQECTEAHISRWRALPSVVSYGHVKILQAMNLVREIEESTDIRIALLEAPSNKVDQALMGDMKSLMKVFRNRTPTTSDDMGFVSTWYDWRNQIHGMMLQRFEYWDKVGLNVAATGNQSIVPIHSMAQAQLAVAKHAKNLGFHNLTKDLLNKLAGLTAIPMMDAQDKVCTYGKTLRDMANSAADERVKNELLCEALEVLEDVRIDDLQKDQVAALLYHRANIHSVLDQAENADYTFSAASQLVDLQNSVTTTGIKLMKNWGHHLYKRFFSTTVCKETGNNFGRQALACYFIAARVDNDIKARKPIAKILWLSKHLNACGSHEVMNRVIKKQLHSLNLFNWLYWLPQLVTDVRYKPNSNFVLILCKMAAAHPLQVFYHIREAVSVDDIDSVLEEDYTDEQMSMDVSDEDCFADDPPFDRILKICLKYRPTDIRVFHRVLKELDEMNETWVERHLRHAICLKDQMFKDFSEQMDATFNEMQYSEDVTMMTLRWRKQLEEDLVYFQQNYNLDFLEIRNKRKMIVTKGCMGVEKSQIMFEKELSQVFTEPAGMQDEFDFVTNMTNMMVSQLDIHAVDAPRPQGYIRIVLDWIRAIRRRFDRLPRRIPLESSSPYLARFSHRTGCIEMPYDLLNVLRAKNHTLMASNQTGQYISMLSRFEPNFEIVIKGGQVIRKIYIRGQTGKSAAFYLKKSVQDEPTNRVPQMFKHLDHVLQTDRESARRHLHAPTVLQMRVGQKTTLYEVASVQPYAMPPDCTRNYPASQIDIVHPYDVLTATFNGSYYPDDMVLHFFERFAQSSSSIGQPLPTPTNQDGTVAPPRLTEAHHIKNIIYEDFARDMIPFRLLYDYLTARYPDPVMYYAMKKQLLHSLAVLSTIEYHCNLTPMGPDQMMMTMNTGVLSNPSYRFEIRGGRSLHDIQHFGHEVPFRLTPNLSILVGVAQDGDLLWSMAAASKCLMKKEPEVIMRPLVWDEFANNTDCDKSRLQVFACHASNSYINGVASKLRNTNSADAKLRKDDCVSLISRAKDSDNLARMPPTYHAWF</sequence>
<feature type="chain" id="PRO_0000432833" description="Transcription-associated protein 1" evidence="12">
    <location>
        <begin position="1"/>
        <end position="4062"/>
    </location>
</feature>
<feature type="repeat" description="TPR 1" evidence="2">
    <location>
        <begin position="1346"/>
        <end position="1379"/>
    </location>
</feature>
<feature type="repeat" description="TPR 2" evidence="2">
    <location>
        <begin position="1677"/>
        <end position="1714"/>
    </location>
</feature>
<feature type="domain" description="FAT" evidence="4">
    <location>
        <begin position="2800"/>
        <end position="3411"/>
    </location>
</feature>
<feature type="repeat" description="TPR 3" evidence="2">
    <location>
        <begin position="2847"/>
        <end position="2880"/>
    </location>
</feature>
<feature type="domain" description="PI3K/PI4K catalytic" evidence="3">
    <location>
        <begin position="3682"/>
        <end position="4046"/>
    </location>
</feature>
<feature type="domain" description="FATC" evidence="5">
    <location>
        <begin position="4031"/>
        <end position="4062"/>
    </location>
</feature>
<feature type="region of interest" description="Disordered" evidence="6">
    <location>
        <begin position="531"/>
        <end position="562"/>
    </location>
</feature>
<feature type="region of interest" description="Disordered" evidence="6">
    <location>
        <begin position="2659"/>
        <end position="2692"/>
    </location>
</feature>
<feature type="region of interest" description="G-loop" evidence="3">
    <location>
        <begin position="3688"/>
        <end position="3694"/>
    </location>
</feature>
<feature type="region of interest" description="Catalytic loop" evidence="3">
    <location>
        <begin position="3902"/>
        <end position="3910"/>
    </location>
</feature>
<feature type="region of interest" description="Activation loop" evidence="3">
    <location>
        <begin position="3922"/>
        <end position="3950"/>
    </location>
</feature>
<feature type="compositionally biased region" description="Basic and acidic residues" evidence="6">
    <location>
        <begin position="2659"/>
        <end position="2670"/>
    </location>
</feature>
<feature type="compositionally biased region" description="Acidic residues" evidence="6">
    <location>
        <begin position="2671"/>
        <end position="2680"/>
    </location>
</feature>
<feature type="compositionally biased region" description="Basic and acidic residues" evidence="6">
    <location>
        <begin position="2681"/>
        <end position="2692"/>
    </location>
</feature>
<feature type="splice variant" id="VSP_057584" description="In isoform c.">
    <location>
        <begin position="823"/>
        <end position="825"/>
    </location>
</feature>
<feature type="splice variant" id="VSP_057585" description="In isoform c.">
    <location>
        <begin position="952"/>
        <end position="954"/>
    </location>
</feature>
<feature type="splice variant" id="VSP_057586" description="In isoform c.">
    <location>
        <begin position="2323"/>
        <end position="2325"/>
    </location>
</feature>
<feature type="splice variant" id="VSP_057587" description="In isoform c.">
    <original>NCR</original>
    <variation>K</variation>
    <location>
        <begin position="2371"/>
        <end position="2373"/>
    </location>
</feature>
<feature type="splice variant" id="VSP_057588" description="In isoform b.">
    <location>
        <begin position="4003"/>
        <end position="4005"/>
    </location>
</feature>
<feature type="sequence conflict" description="In Ref. 1; AAS65430." evidence="12" ref="1">
    <original>N</original>
    <variation>KFS</variation>
    <location>
        <position position="2118"/>
    </location>
</feature>
<reference evidence="13" key="1">
    <citation type="journal article" date="2004" name="Dev. Cell">
        <title>A new class of C. elegans synMuv genes implicates a Tip60/NuA4-like HAT complex as a negative regulator of Ras signaling.</title>
        <authorList>
            <person name="Ceol C.J."/>
            <person name="Horvitz H.R."/>
        </authorList>
    </citation>
    <scope>NUCLEOTIDE SEQUENCE [MRNA] (ISOFORM A)</scope>
    <scope>FUNCTION</scope>
    <scope>SUBCELLULAR LOCATION</scope>
    <scope>TISSUE SPECIFICITY</scope>
    <scope>DEVELOPMENTAL STAGE</scope>
    <scope>DISRUPTION PHENOTYPE</scope>
</reference>
<reference evidence="14" key="2">
    <citation type="journal article" date="1998" name="Science">
        <title>Genome sequence of the nematode C. elegans: a platform for investigating biology.</title>
        <authorList>
            <consortium name="The C. elegans sequencing consortium"/>
        </authorList>
    </citation>
    <scope>NUCLEOTIDE SEQUENCE [LARGE SCALE GENOMIC DNA]</scope>
    <source>
        <strain evidence="14">Bristol N2</strain>
    </source>
</reference>
<reference evidence="12" key="3">
    <citation type="journal article" date="2013" name="PLoS Genet.">
        <title>Evolutionary change within a bipotential switch shaped the sperm/oocyte decision in hermaphroditic nematodes.</title>
        <authorList>
            <person name="Guo Y."/>
            <person name="Chen X."/>
            <person name="Ellis R.E."/>
        </authorList>
    </citation>
    <scope>FUNCTION</scope>
    <scope>DISRUPTION PHENOTYPE</scope>
</reference>
<reference evidence="12" key="4">
    <citation type="journal article" date="2017" name="EMBO Rep.">
        <title>The MYST family histone acetyltransferase complex regulates stress resistance and longevity through transcriptional control of DAF-16/FOXO transcription factors.</title>
        <authorList>
            <person name="Ikeda T."/>
            <person name="Uno M."/>
            <person name="Honjoh S."/>
            <person name="Nishida E."/>
        </authorList>
    </citation>
    <scope>FUNCTION</scope>
    <scope>SUBUNIT</scope>
    <scope>DISRUPTION PHENOTYPE</scope>
</reference>
<organism>
    <name type="scientific">Caenorhabditis elegans</name>
    <dbReference type="NCBI Taxonomy" id="6239"/>
    <lineage>
        <taxon>Eukaryota</taxon>
        <taxon>Metazoa</taxon>
        <taxon>Ecdysozoa</taxon>
        <taxon>Nematoda</taxon>
        <taxon>Chromadorea</taxon>
        <taxon>Rhabditida</taxon>
        <taxon>Rhabditina</taxon>
        <taxon>Rhabditomorpha</taxon>
        <taxon>Rhabditoidea</taxon>
        <taxon>Rhabditidae</taxon>
        <taxon>Peloderinae</taxon>
        <taxon>Caenorhabditis</taxon>
    </lineage>
</organism>
<keyword id="KW-0025">Alternative splicing</keyword>
<keyword id="KW-0158">Chromosome</keyword>
<keyword id="KW-0217">Developmental protein</keyword>
<keyword id="KW-0221">Differentiation</keyword>
<keyword id="KW-0539">Nucleus</keyword>
<keyword id="KW-1185">Reference proteome</keyword>
<keyword id="KW-0677">Repeat</keyword>
<keyword id="KW-0744">Spermatogenesis</keyword>
<keyword id="KW-0346">Stress response</keyword>
<keyword id="KW-0802">TPR repeat</keyword>
<accession>G5EEV2</accession>
<accession>Q5CZ43</accession>
<accession>Q6A4L2</accession>
<comment type="function">
    <text evidence="1 7 8 9">Influences germ cell fate in hermaphrodites (PubMed:24098152). Acts downstream of tra-2 and tra-3 and through the Tip60 histone acetyltransferase complex to regulate germ cell fate decisions (By similarity). Required for spermatogenesis and embryonic development (By similarity). Acts with tra-2 to promote expression of fog-3 and control male tail development (By similarity). Involved in the negative regulation of vulval development (PubMed:15068795). Involved in the positive regulation of transcription factor daf-16, probably acting by histone acetylation; thereby modulating stress resistance (PubMed:28794203). Plays a role in acetylation of nucleosomal histone H4, probably acting as a component of the Tip60 histone acetyltransferase complex (PubMed:28794203).</text>
</comment>
<comment type="subunit">
    <text evidence="9 11">Interacts with histone acetyltransferase Tip60 homolog mys-1 (PubMed:28794203). Probably a component of a complex with histone acetyltransferase (HAT) activity, at least composed of mys-1 and trr-1 (PubMed:28794203).</text>
</comment>
<comment type="subcellular location">
    <subcellularLocation>
        <location evidence="7">Nucleus</location>
    </subcellularLocation>
    <subcellularLocation>
        <location evidence="7">Chromosome</location>
    </subcellularLocation>
    <text evidence="7">Localized to condensed chromosomes during pachytene and diakinesis stages of meiosis I in germ cells.</text>
</comment>
<comment type="alternative products">
    <event type="alternative splicing"/>
    <isoform>
        <id>G5EEV2-1</id>
        <name evidence="15">a</name>
        <sequence type="displayed"/>
    </isoform>
    <isoform>
        <id>G5EEV2-2</id>
        <name evidence="16">b</name>
        <sequence type="described" ref="VSP_057588"/>
    </isoform>
    <isoform>
        <id>G5EEV2-3</id>
        <name evidence="17">c</name>
        <sequence type="described" ref="VSP_057584 VSP_057585 VSP_057586 VSP_057587"/>
    </isoform>
</comment>
<comment type="tissue specificity">
    <text evidence="7">Expressed in germ cells and somatic cells.</text>
</comment>
<comment type="developmental stage">
    <text evidence="7">Expressed throughout development from one-cell stage embryos onwards.</text>
</comment>
<comment type="disruption phenotype">
    <text evidence="7 8 9">RNAi-mediated knockdown results in partial sterility and the production of oocytes by 14% of males at 20 degees Celsius and by 23% of males at 25 degrees Celsius (PubMed:15068795, PubMed:24098152). At 25 degrees Celsius, 8% of males produce no mature germ cells and hermaphrodites develop into females (PubMed:24098152). Suppresses time-restricted diet-induced lifespan extension and also the age-dependent decline in locomotor activity (PubMed:28794203). Reduces expression of transcription factor daf-16 at transcript and protein level (PubMed:28794203). Reduces expression of superoxide dismutase sod-3 and of hsp-12.6, but not of eat-2, daf-2, pha-4, hsf-1, and skn-1 (PubMed:28794203). Reduces resistance to oxidative stress (PubMed:28794203). Reduces acetylation of histone H4, drastically at 'Lys-16' and modestly at 'Lys-12', respectively; does not affect acetylation levels of histone H3 (PubMed:28794203).</text>
</comment>
<comment type="similarity">
    <text evidence="12">Belongs to the PI3/PI4-kinase family. TRA1 subfamily.</text>
</comment>
<proteinExistence type="evidence at protein level"/>
<name>TRR1_CAEEL</name>
<dbReference type="EMBL" id="AY551966">
    <property type="protein sequence ID" value="AAS65430.1"/>
    <property type="molecule type" value="mRNA"/>
</dbReference>
<dbReference type="EMBL" id="Z69902">
    <property type="protein sequence ID" value="CAA93765.2"/>
    <property type="molecule type" value="Genomic_DNA"/>
</dbReference>
<dbReference type="EMBL" id="Z69902">
    <property type="protein sequence ID" value="CAH10779.1"/>
    <property type="molecule type" value="Genomic_DNA"/>
</dbReference>
<dbReference type="EMBL" id="Z69902">
    <property type="protein sequence ID" value="CAI59119.1"/>
    <property type="molecule type" value="Genomic_DNA"/>
</dbReference>
<dbReference type="PIR" id="T19997">
    <property type="entry name" value="T19997"/>
</dbReference>
<dbReference type="RefSeq" id="NP_001022030.1">
    <property type="nucleotide sequence ID" value="NM_001026859.2"/>
</dbReference>
<dbReference type="RefSeq" id="NP_001022031.1">
    <property type="nucleotide sequence ID" value="NM_001026860.4"/>
</dbReference>
<dbReference type="RefSeq" id="NP_001022032.1">
    <property type="nucleotide sequence ID" value="NM_001026861.4"/>
</dbReference>
<dbReference type="SMR" id="G5EEV2"/>
<dbReference type="FunCoup" id="G5EEV2">
    <property type="interactions" value="2535"/>
</dbReference>
<dbReference type="STRING" id="6239.C47D12.1a.1"/>
<dbReference type="PaxDb" id="6239-C47D12.1a"/>
<dbReference type="PeptideAtlas" id="G5EEV2"/>
<dbReference type="EnsemblMetazoa" id="C47D12.1a.1">
    <property type="protein sequence ID" value="C47D12.1a.1"/>
    <property type="gene ID" value="WBGene00007028"/>
</dbReference>
<dbReference type="EnsemblMetazoa" id="C47D12.1b.1">
    <property type="protein sequence ID" value="C47D12.1b.1"/>
    <property type="gene ID" value="WBGene00007028"/>
</dbReference>
<dbReference type="EnsemblMetazoa" id="C47D12.1c.1">
    <property type="protein sequence ID" value="C47D12.1c.1"/>
    <property type="gene ID" value="WBGene00007028"/>
</dbReference>
<dbReference type="UCSC" id="C47D12.1b">
    <property type="organism name" value="c. elegans"/>
</dbReference>
<dbReference type="AGR" id="WB:WBGene00007028"/>
<dbReference type="WormBase" id="C47D12.1a">
    <molecule id="G5EEV2-1"/>
    <property type="protein sequence ID" value="CE53926"/>
    <property type="gene ID" value="WBGene00007028"/>
    <property type="gene designation" value="trr-1"/>
</dbReference>
<dbReference type="WormBase" id="C47D12.1b">
    <molecule id="G5EEV2-2"/>
    <property type="protein sequence ID" value="CE53895"/>
    <property type="gene ID" value="WBGene00007028"/>
    <property type="gene designation" value="trr-1"/>
</dbReference>
<dbReference type="WormBase" id="C47D12.1c">
    <molecule id="G5EEV2-3"/>
    <property type="protein sequence ID" value="CE53987"/>
    <property type="gene ID" value="WBGene00007028"/>
    <property type="gene designation" value="trr-1"/>
</dbReference>
<dbReference type="eggNOG" id="KOG0889">
    <property type="taxonomic scope" value="Eukaryota"/>
</dbReference>
<dbReference type="InParanoid" id="G5EEV2"/>
<dbReference type="OMA" id="CETCPSH"/>
<dbReference type="PhylomeDB" id="G5EEV2"/>
<dbReference type="PRO" id="PR:G5EEV2"/>
<dbReference type="Proteomes" id="UP000001940">
    <property type="component" value="Chromosome II"/>
</dbReference>
<dbReference type="Bgee" id="WBGene00007028">
    <property type="expression patterns" value="Expressed in germ line (C elegans) and 4 other cell types or tissues"/>
</dbReference>
<dbReference type="GO" id="GO:0000793">
    <property type="term" value="C:condensed chromosome"/>
    <property type="evidence" value="ECO:0000314"/>
    <property type="project" value="WormBase"/>
</dbReference>
<dbReference type="GO" id="GO:0000123">
    <property type="term" value="C:histone acetyltransferase complex"/>
    <property type="evidence" value="ECO:0000250"/>
    <property type="project" value="WormBase"/>
</dbReference>
<dbReference type="GO" id="GO:0035267">
    <property type="term" value="C:NuA4 histone acetyltransferase complex"/>
    <property type="evidence" value="ECO:0000318"/>
    <property type="project" value="GO_Central"/>
</dbReference>
<dbReference type="GO" id="GO:0005634">
    <property type="term" value="C:nucleus"/>
    <property type="evidence" value="ECO:0000314"/>
    <property type="project" value="WormBase"/>
</dbReference>
<dbReference type="GO" id="GO:0000124">
    <property type="term" value="C:SAGA complex"/>
    <property type="evidence" value="ECO:0000318"/>
    <property type="project" value="GO_Central"/>
</dbReference>
<dbReference type="GO" id="GO:0030154">
    <property type="term" value="P:cell differentiation"/>
    <property type="evidence" value="ECO:0007669"/>
    <property type="project" value="UniProtKB-KW"/>
</dbReference>
<dbReference type="GO" id="GO:0140861">
    <property type="term" value="P:DNA repair-dependent chromatin remodeling"/>
    <property type="evidence" value="ECO:0000318"/>
    <property type="project" value="GO_Central"/>
</dbReference>
<dbReference type="GO" id="GO:0040027">
    <property type="term" value="P:negative regulation of vulval development"/>
    <property type="evidence" value="ECO:0000315"/>
    <property type="project" value="WormBase"/>
</dbReference>
<dbReference type="GO" id="GO:0040010">
    <property type="term" value="P:positive regulation of growth rate"/>
    <property type="evidence" value="ECO:0000315"/>
    <property type="project" value="WormBase"/>
</dbReference>
<dbReference type="GO" id="GO:0006355">
    <property type="term" value="P:regulation of DNA-templated transcription"/>
    <property type="evidence" value="ECO:0000318"/>
    <property type="project" value="GO_Central"/>
</dbReference>
<dbReference type="GO" id="GO:0022414">
    <property type="term" value="P:reproductive process"/>
    <property type="evidence" value="ECO:0000315"/>
    <property type="project" value="WormBase"/>
</dbReference>
<dbReference type="GO" id="GO:0007283">
    <property type="term" value="P:spermatogenesis"/>
    <property type="evidence" value="ECO:0007669"/>
    <property type="project" value="UniProtKB-KW"/>
</dbReference>
<dbReference type="CDD" id="cd05163">
    <property type="entry name" value="PIKK_TRRAP"/>
    <property type="match status" value="1"/>
</dbReference>
<dbReference type="InterPro" id="IPR016024">
    <property type="entry name" value="ARM-type_fold"/>
</dbReference>
<dbReference type="InterPro" id="IPR050517">
    <property type="entry name" value="DDR_Repair_Kinase"/>
</dbReference>
<dbReference type="InterPro" id="IPR003152">
    <property type="entry name" value="FATC_dom"/>
</dbReference>
<dbReference type="InterPro" id="IPR011009">
    <property type="entry name" value="Kinase-like_dom_sf"/>
</dbReference>
<dbReference type="InterPro" id="IPR000403">
    <property type="entry name" value="PI3/4_kinase_cat_dom"/>
</dbReference>
<dbReference type="InterPro" id="IPR003151">
    <property type="entry name" value="PIK-rel_kinase_FAT"/>
</dbReference>
<dbReference type="InterPro" id="IPR014009">
    <property type="entry name" value="PIK_FAT"/>
</dbReference>
<dbReference type="InterPro" id="IPR046807">
    <property type="entry name" value="Tra1_central"/>
</dbReference>
<dbReference type="InterPro" id="IPR046805">
    <property type="entry name" value="Tra1_ring"/>
</dbReference>
<dbReference type="PANTHER" id="PTHR11139">
    <property type="entry name" value="ATAXIA TELANGIECTASIA MUTATED ATM -RELATED"/>
    <property type="match status" value="1"/>
</dbReference>
<dbReference type="PANTHER" id="PTHR11139:SF1">
    <property type="entry name" value="TRANSFORMATION_TRANSCRIPTION DOMAIN-ASSOCIATED PROTEIN"/>
    <property type="match status" value="1"/>
</dbReference>
<dbReference type="Pfam" id="PF02259">
    <property type="entry name" value="FAT"/>
    <property type="match status" value="1"/>
</dbReference>
<dbReference type="Pfam" id="PF20175">
    <property type="entry name" value="Tra1_central"/>
    <property type="match status" value="1"/>
</dbReference>
<dbReference type="Pfam" id="PF20206">
    <property type="entry name" value="Tra1_ring"/>
    <property type="match status" value="1"/>
</dbReference>
<dbReference type="SMART" id="SM00146">
    <property type="entry name" value="PI3Kc"/>
    <property type="match status" value="1"/>
</dbReference>
<dbReference type="SUPFAM" id="SSF48371">
    <property type="entry name" value="ARM repeat"/>
    <property type="match status" value="2"/>
</dbReference>
<dbReference type="SUPFAM" id="SSF56112">
    <property type="entry name" value="Protein kinase-like (PK-like)"/>
    <property type="match status" value="1"/>
</dbReference>
<dbReference type="PROSITE" id="PS51189">
    <property type="entry name" value="FAT"/>
    <property type="match status" value="1"/>
</dbReference>
<dbReference type="PROSITE" id="PS51190">
    <property type="entry name" value="FATC"/>
    <property type="match status" value="1"/>
</dbReference>
<dbReference type="PROSITE" id="PS50290">
    <property type="entry name" value="PI3_4_KINASE_3"/>
    <property type="match status" value="1"/>
</dbReference>